<sequence>MTAEPNKPCQIKRDYQQLINLYPATADTDAHYLSKLSIYQQRVFEAHSQQKLLILGQIGLGNGLELLSWWRTQANPSQRLLLKVFEPNPINAYELKSLWDQSLALVKETPFEPHLESKQASALECKPELSQLAQTLLDAEPTAIIGCQRLIFDDGRTTIDLHFGDIQTQLSSLSHSPMHPVQHWLILPHLLQALHHQSHWQMAKLSDDSATIATIGLSESSGLSETTVKRFQACGFTVSDINELATKALGINALGIHQPVTLINHQPDAVLLHERQVLRQQDVKAYAFNPMAAILSSATPSSIAIIGGGLASAHLALSLAERGQGAQVFCKDAELGQGASGNRQGAIYPLLTPENDELSRFFQQAFLFSRRRVQALTSAPAVNQTSISHDFCGVLQTAHDERSQLRLDKIIQGQPWPSEIAYAVDAEQANAIAKINLDKPGFFYPLGGWVCPFEYADAAIQKAMQLADVSVSLNTDILAIERQADGWVLLTEKERFGPFAQLVLANGAELTQFDASNKLQISPFRGQVSHVPAQFQLSQLATVLCANGYLTPSHQGLHCLGASYVKEPEHLDFCPQEQQENLMKMHESYPDHSWLEDIDMSGNNARVGVRMVTRDHFPMMGCAPDVPKILKDYEQHQLTKESRHYWQTTPAPLHQGLYILGGLGSRGLSSGPLAAECLAAQLCGEPIPLDKETLCKLNPNRMWLRKLLKGKAL</sequence>
<keyword id="KW-0963">Cytoplasm</keyword>
<keyword id="KW-0274">FAD</keyword>
<keyword id="KW-0285">Flavoprotein</keyword>
<keyword id="KW-0489">Methyltransferase</keyword>
<keyword id="KW-0511">Multifunctional enzyme</keyword>
<keyword id="KW-0560">Oxidoreductase</keyword>
<keyword id="KW-1185">Reference proteome</keyword>
<keyword id="KW-0949">S-adenosyl-L-methionine</keyword>
<keyword id="KW-0808">Transferase</keyword>
<keyword id="KW-0819">tRNA processing</keyword>
<name>MNMC_SHEB5</name>
<gene>
    <name evidence="1" type="primary">mnmC</name>
    <name type="ordered locus">Sbal_2747</name>
</gene>
<feature type="chain" id="PRO_0000348023" description="tRNA 5-methylaminomethyl-2-thiouridine biosynthesis bifunctional protein MnmC">
    <location>
        <begin position="1"/>
        <end position="713"/>
    </location>
</feature>
<feature type="region of interest" description="tRNA (mnm(5)s(2)U34)-methyltransferase">
    <location>
        <begin position="1"/>
        <end position="300"/>
    </location>
</feature>
<feature type="region of interest" description="FAD-dependent cmnm(5)s(2)U34 oxidoreductase">
    <location>
        <begin position="306"/>
        <end position="713"/>
    </location>
</feature>
<organism>
    <name type="scientific">Shewanella baltica (strain OS155 / ATCC BAA-1091)</name>
    <dbReference type="NCBI Taxonomy" id="325240"/>
    <lineage>
        <taxon>Bacteria</taxon>
        <taxon>Pseudomonadati</taxon>
        <taxon>Pseudomonadota</taxon>
        <taxon>Gammaproteobacteria</taxon>
        <taxon>Alteromonadales</taxon>
        <taxon>Shewanellaceae</taxon>
        <taxon>Shewanella</taxon>
    </lineage>
</organism>
<accession>A3D671</accession>
<protein>
    <recommendedName>
        <fullName evidence="1">tRNA 5-methylaminomethyl-2-thiouridine biosynthesis bifunctional protein MnmC</fullName>
        <shortName evidence="1">tRNA mnm(5)s(2)U biosynthesis bifunctional protein</shortName>
    </recommendedName>
    <domain>
        <recommendedName>
            <fullName evidence="1">tRNA (mnm(5)s(2)U34)-methyltransferase</fullName>
            <ecNumber evidence="1">2.1.1.61</ecNumber>
        </recommendedName>
    </domain>
    <domain>
        <recommendedName>
            <fullName evidence="1">FAD-dependent cmnm(5)s(2)U34 oxidoreductase</fullName>
            <ecNumber evidence="1">1.5.-.-</ecNumber>
        </recommendedName>
    </domain>
</protein>
<evidence type="ECO:0000255" key="1">
    <source>
        <dbReference type="HAMAP-Rule" id="MF_01102"/>
    </source>
</evidence>
<proteinExistence type="inferred from homology"/>
<dbReference type="EC" id="2.1.1.61" evidence="1"/>
<dbReference type="EC" id="1.5.-.-" evidence="1"/>
<dbReference type="EMBL" id="CP000563">
    <property type="protein sequence ID" value="ABN62234.1"/>
    <property type="molecule type" value="Genomic_DNA"/>
</dbReference>
<dbReference type="RefSeq" id="WP_011847181.1">
    <property type="nucleotide sequence ID" value="NC_009052.1"/>
</dbReference>
<dbReference type="SMR" id="A3D671"/>
<dbReference type="STRING" id="325240.Sbal_2747"/>
<dbReference type="KEGG" id="sbl:Sbal_2747"/>
<dbReference type="HOGENOM" id="CLU_022427_2_1_6"/>
<dbReference type="OrthoDB" id="9786494at2"/>
<dbReference type="Proteomes" id="UP000001557">
    <property type="component" value="Chromosome"/>
</dbReference>
<dbReference type="GO" id="GO:0005737">
    <property type="term" value="C:cytoplasm"/>
    <property type="evidence" value="ECO:0007669"/>
    <property type="project" value="UniProtKB-SubCell"/>
</dbReference>
<dbReference type="GO" id="GO:0050660">
    <property type="term" value="F:flavin adenine dinucleotide binding"/>
    <property type="evidence" value="ECO:0007669"/>
    <property type="project" value="UniProtKB-UniRule"/>
</dbReference>
<dbReference type="GO" id="GO:0016645">
    <property type="term" value="F:oxidoreductase activity, acting on the CH-NH group of donors"/>
    <property type="evidence" value="ECO:0007669"/>
    <property type="project" value="InterPro"/>
</dbReference>
<dbReference type="GO" id="GO:0004808">
    <property type="term" value="F:tRNA (5-methylaminomethyl-2-thiouridylate)(34)-methyltransferase activity"/>
    <property type="evidence" value="ECO:0007669"/>
    <property type="project" value="UniProtKB-EC"/>
</dbReference>
<dbReference type="GO" id="GO:0032259">
    <property type="term" value="P:methylation"/>
    <property type="evidence" value="ECO:0007669"/>
    <property type="project" value="UniProtKB-KW"/>
</dbReference>
<dbReference type="GO" id="GO:0002098">
    <property type="term" value="P:tRNA wobble uridine modification"/>
    <property type="evidence" value="ECO:0007669"/>
    <property type="project" value="TreeGrafter"/>
</dbReference>
<dbReference type="Gene3D" id="3.30.9.10">
    <property type="entry name" value="D-Amino Acid Oxidase, subunit A, domain 2"/>
    <property type="match status" value="1"/>
</dbReference>
<dbReference type="Gene3D" id="3.50.50.60">
    <property type="entry name" value="FAD/NAD(P)-binding domain"/>
    <property type="match status" value="1"/>
</dbReference>
<dbReference type="Gene3D" id="3.40.50.150">
    <property type="entry name" value="Vaccinia Virus protein VP39"/>
    <property type="match status" value="1"/>
</dbReference>
<dbReference type="HAMAP" id="MF_01102">
    <property type="entry name" value="MnmC"/>
    <property type="match status" value="1"/>
</dbReference>
<dbReference type="InterPro" id="IPR006076">
    <property type="entry name" value="FAD-dep_OxRdtase"/>
</dbReference>
<dbReference type="InterPro" id="IPR036188">
    <property type="entry name" value="FAD/NAD-bd_sf"/>
</dbReference>
<dbReference type="InterPro" id="IPR029063">
    <property type="entry name" value="SAM-dependent_MTases_sf"/>
</dbReference>
<dbReference type="InterPro" id="IPR023032">
    <property type="entry name" value="tRNA_MAMT_biosynth_bifunc_MnmC"/>
</dbReference>
<dbReference type="InterPro" id="IPR017610">
    <property type="entry name" value="tRNA_S-uridine_synth_MnmC_C"/>
</dbReference>
<dbReference type="NCBIfam" id="TIGR03197">
    <property type="entry name" value="MnmC_Cterm"/>
    <property type="match status" value="1"/>
</dbReference>
<dbReference type="PANTHER" id="PTHR13847">
    <property type="entry name" value="SARCOSINE DEHYDROGENASE-RELATED"/>
    <property type="match status" value="1"/>
</dbReference>
<dbReference type="PANTHER" id="PTHR13847:SF283">
    <property type="entry name" value="TRNA 5-METHYLAMINOMETHYL-2-THIOURIDINE BIOSYNTHESIS BIFUNCTIONAL PROTEIN MNMC"/>
    <property type="match status" value="1"/>
</dbReference>
<dbReference type="Pfam" id="PF01266">
    <property type="entry name" value="DAO"/>
    <property type="match status" value="1"/>
</dbReference>
<dbReference type="SUPFAM" id="SSF51905">
    <property type="entry name" value="FAD/NAD(P)-binding domain"/>
    <property type="match status" value="1"/>
</dbReference>
<comment type="function">
    <text evidence="1">Catalyzes the last two steps in the biosynthesis of 5-methylaminomethyl-2-thiouridine (mnm(5)s(2)U) at the wobble position (U34) in tRNA. Catalyzes the FAD-dependent demodification of cmnm(5)s(2)U34 to nm(5)s(2)U34, followed by the transfer of a methyl group from S-adenosyl-L-methionine to nm(5)s(2)U34, to form mnm(5)s(2)U34.</text>
</comment>
<comment type="catalytic activity">
    <reaction evidence="1">
        <text>5-aminomethyl-2-thiouridine(34) in tRNA + S-adenosyl-L-methionine = 5-methylaminomethyl-2-thiouridine(34) in tRNA + S-adenosyl-L-homocysteine + H(+)</text>
        <dbReference type="Rhea" id="RHEA:19569"/>
        <dbReference type="Rhea" id="RHEA-COMP:10195"/>
        <dbReference type="Rhea" id="RHEA-COMP:10197"/>
        <dbReference type="ChEBI" id="CHEBI:15378"/>
        <dbReference type="ChEBI" id="CHEBI:57856"/>
        <dbReference type="ChEBI" id="CHEBI:59789"/>
        <dbReference type="ChEBI" id="CHEBI:74454"/>
        <dbReference type="ChEBI" id="CHEBI:74455"/>
        <dbReference type="EC" id="2.1.1.61"/>
    </reaction>
</comment>
<comment type="cofactor">
    <cofactor evidence="1">
        <name>FAD</name>
        <dbReference type="ChEBI" id="CHEBI:57692"/>
    </cofactor>
</comment>
<comment type="subcellular location">
    <subcellularLocation>
        <location evidence="1">Cytoplasm</location>
    </subcellularLocation>
</comment>
<comment type="similarity">
    <text evidence="1">In the N-terminal section; belongs to the methyltransferase superfamily. tRNA (mnm(5)s(2)U34)-methyltransferase family.</text>
</comment>
<comment type="similarity">
    <text evidence="1">In the C-terminal section; belongs to the DAO family.</text>
</comment>
<reference key="1">
    <citation type="submission" date="2007-02" db="EMBL/GenBank/DDBJ databases">
        <title>Complete sequence of chromosome of Shewanella baltica OS155.</title>
        <authorList>
            <consortium name="US DOE Joint Genome Institute"/>
            <person name="Copeland A."/>
            <person name="Lucas S."/>
            <person name="Lapidus A."/>
            <person name="Barry K."/>
            <person name="Detter J.C."/>
            <person name="Glavina del Rio T."/>
            <person name="Hammon N."/>
            <person name="Israni S."/>
            <person name="Dalin E."/>
            <person name="Tice H."/>
            <person name="Pitluck S."/>
            <person name="Sims D.R."/>
            <person name="Brettin T."/>
            <person name="Bruce D."/>
            <person name="Han C."/>
            <person name="Tapia R."/>
            <person name="Brainard J."/>
            <person name="Schmutz J."/>
            <person name="Larimer F."/>
            <person name="Land M."/>
            <person name="Hauser L."/>
            <person name="Kyrpides N."/>
            <person name="Mikhailova N."/>
            <person name="Brettar I."/>
            <person name="Klappenbach J."/>
            <person name="Konstantinidis K."/>
            <person name="Rodrigues J."/>
            <person name="Tiedje J."/>
            <person name="Richardson P."/>
        </authorList>
    </citation>
    <scope>NUCLEOTIDE SEQUENCE [LARGE SCALE GENOMIC DNA]</scope>
    <source>
        <strain>OS155 / ATCC BAA-1091</strain>
    </source>
</reference>